<comment type="similarity">
    <text evidence="1">Belongs to the UPF0597 family.</text>
</comment>
<feature type="chain" id="PRO_0000339842" description="UPF0597 protein YhaM">
    <location>
        <begin position="1"/>
        <end position="436"/>
    </location>
</feature>
<reference key="1">
    <citation type="journal article" date="2001" name="Nature">
        <title>Complete genome sequence of a multiple drug resistant Salmonella enterica serovar Typhi CT18.</title>
        <authorList>
            <person name="Parkhill J."/>
            <person name="Dougan G."/>
            <person name="James K.D."/>
            <person name="Thomson N.R."/>
            <person name="Pickard D."/>
            <person name="Wain J."/>
            <person name="Churcher C.M."/>
            <person name="Mungall K.L."/>
            <person name="Bentley S.D."/>
            <person name="Holden M.T.G."/>
            <person name="Sebaihia M."/>
            <person name="Baker S."/>
            <person name="Basham D."/>
            <person name="Brooks K."/>
            <person name="Chillingworth T."/>
            <person name="Connerton P."/>
            <person name="Cronin A."/>
            <person name="Davis P."/>
            <person name="Davies R.M."/>
            <person name="Dowd L."/>
            <person name="White N."/>
            <person name="Farrar J."/>
            <person name="Feltwell T."/>
            <person name="Hamlin N."/>
            <person name="Haque A."/>
            <person name="Hien T.T."/>
            <person name="Holroyd S."/>
            <person name="Jagels K."/>
            <person name="Krogh A."/>
            <person name="Larsen T.S."/>
            <person name="Leather S."/>
            <person name="Moule S."/>
            <person name="O'Gaora P."/>
            <person name="Parry C."/>
            <person name="Quail M.A."/>
            <person name="Rutherford K.M."/>
            <person name="Simmonds M."/>
            <person name="Skelton J."/>
            <person name="Stevens K."/>
            <person name="Whitehead S."/>
            <person name="Barrell B.G."/>
        </authorList>
    </citation>
    <scope>NUCLEOTIDE SEQUENCE [LARGE SCALE GENOMIC DNA]</scope>
    <source>
        <strain>CT18</strain>
    </source>
</reference>
<reference key="2">
    <citation type="journal article" date="2003" name="J. Bacteriol.">
        <title>Comparative genomics of Salmonella enterica serovar Typhi strains Ty2 and CT18.</title>
        <authorList>
            <person name="Deng W."/>
            <person name="Liou S.-R."/>
            <person name="Plunkett G. III"/>
            <person name="Mayhew G.F."/>
            <person name="Rose D.J."/>
            <person name="Burland V."/>
            <person name="Kodoyianni V."/>
            <person name="Schwartz D.C."/>
            <person name="Blattner F.R."/>
        </authorList>
    </citation>
    <scope>NUCLEOTIDE SEQUENCE [LARGE SCALE GENOMIC DNA]</scope>
    <source>
        <strain>ATCC 700931 / Ty2</strain>
    </source>
</reference>
<evidence type="ECO:0000255" key="1">
    <source>
        <dbReference type="HAMAP-Rule" id="MF_01845"/>
    </source>
</evidence>
<dbReference type="EMBL" id="AE014613">
    <property type="protein sequence ID" value="AAO70699.1"/>
    <property type="molecule type" value="Genomic_DNA"/>
</dbReference>
<dbReference type="EMBL" id="AL513382">
    <property type="protein sequence ID" value="CAD07762.1"/>
    <property type="molecule type" value="Genomic_DNA"/>
</dbReference>
<dbReference type="RefSeq" id="NP_457627.1">
    <property type="nucleotide sequence ID" value="NC_003198.1"/>
</dbReference>
<dbReference type="RefSeq" id="WP_000463069.1">
    <property type="nucleotide sequence ID" value="NZ_WSUR01000003.1"/>
</dbReference>
<dbReference type="SMR" id="Q8Z3K8"/>
<dbReference type="KEGG" id="stt:t3158"/>
<dbReference type="KEGG" id="sty:STY3418"/>
<dbReference type="PATRIC" id="fig|220341.7.peg.3480"/>
<dbReference type="eggNOG" id="COG3681">
    <property type="taxonomic scope" value="Bacteria"/>
</dbReference>
<dbReference type="HOGENOM" id="CLU_051840_0_0_6"/>
<dbReference type="OMA" id="MIPVMSN"/>
<dbReference type="OrthoDB" id="41906at2"/>
<dbReference type="Proteomes" id="UP000000541">
    <property type="component" value="Chromosome"/>
</dbReference>
<dbReference type="Proteomes" id="UP000002670">
    <property type="component" value="Chromosome"/>
</dbReference>
<dbReference type="GO" id="GO:0080146">
    <property type="term" value="F:L-cysteine desulfhydrase activity"/>
    <property type="evidence" value="ECO:0007669"/>
    <property type="project" value="TreeGrafter"/>
</dbReference>
<dbReference type="GO" id="GO:0019450">
    <property type="term" value="P:L-cysteine catabolic process to pyruvate"/>
    <property type="evidence" value="ECO:0007669"/>
    <property type="project" value="TreeGrafter"/>
</dbReference>
<dbReference type="HAMAP" id="MF_01845">
    <property type="entry name" value="UPF0597"/>
    <property type="match status" value="1"/>
</dbReference>
<dbReference type="InterPro" id="IPR005130">
    <property type="entry name" value="Ser_deHydtase-like_asu"/>
</dbReference>
<dbReference type="InterPro" id="IPR021144">
    <property type="entry name" value="UPF0597"/>
</dbReference>
<dbReference type="PANTHER" id="PTHR30501">
    <property type="entry name" value="UPF0597 PROTEIN YHAM"/>
    <property type="match status" value="1"/>
</dbReference>
<dbReference type="PANTHER" id="PTHR30501:SF2">
    <property type="entry name" value="UPF0597 PROTEIN YHAM"/>
    <property type="match status" value="1"/>
</dbReference>
<dbReference type="Pfam" id="PF03313">
    <property type="entry name" value="SDH_alpha"/>
    <property type="match status" value="1"/>
</dbReference>
<dbReference type="PIRSF" id="PIRSF006054">
    <property type="entry name" value="UCP006054"/>
    <property type="match status" value="1"/>
</dbReference>
<accession>Q8Z3K8</accession>
<accession>Q7C734</accession>
<name>YHAM_SALTI</name>
<gene>
    <name evidence="1" type="primary">yhaM</name>
    <name type="ordered locus">STY3418</name>
    <name type="ordered locus">t3158</name>
</gene>
<sequence>MFESKINPLWQSFILAVQEEVKPALGCTEPISLALAAAAAAAELDGTVERIDAWVSPNLMKNGMGVTVPGTGMVGLPIAAALGALGGDAKAGLEVLKDASAKAVADAKAMLAAGHVAVMLQEPCNDILFSRAKVYSGDSWACVTIVGDHTNIVRIETDKGVVFTQADNAQEEEKTSPLGVLSHTSLEEILAFVNAVPFDAIRFILDAARLNGALSQEGLRGSWGLHIGSTLAKQCDRGLLAKDLSTAILIRTSAASDARMGGATLPAMSNSGSGNQGITATVPVMVVAEHVGADDECLARALMLSHLSAIYIHHQLPRLSALCAATTAAMGAAAGMAWLIDGRYDTIAMAISSMIGDVSGMICDGASNSCAMKVSTSASAAWKAVLMALDDTAVTGNEGIVAHNVEQSISNLCSLACRSMQQTDKQIIEIMASKAH</sequence>
<protein>
    <recommendedName>
        <fullName evidence="1">UPF0597 protein YhaM</fullName>
    </recommendedName>
</protein>
<organism>
    <name type="scientific">Salmonella typhi</name>
    <dbReference type="NCBI Taxonomy" id="90370"/>
    <lineage>
        <taxon>Bacteria</taxon>
        <taxon>Pseudomonadati</taxon>
        <taxon>Pseudomonadota</taxon>
        <taxon>Gammaproteobacteria</taxon>
        <taxon>Enterobacterales</taxon>
        <taxon>Enterobacteriaceae</taxon>
        <taxon>Salmonella</taxon>
    </lineage>
</organism>
<proteinExistence type="inferred from homology"/>